<sequence length="201" mass="22983">MQIYVSGIHTDVGKTHFSAAFCANFNYDYFKLIQAGTPTDSEFIAKFSPKTKIFKEGIFLQTPASPHLGKIKEKLDYKALDIILPKSKNLLIELAGGLFSPMDENYTMIDFVNIFKHPTILVAKYYLGSINHILLSIEALKQRNINLLALVMMGKKDILQDDFIKNYAKIPIINLDFFDENSILNKDFKEQMQEILQLKIP</sequence>
<name>BIOD_CAMJE</name>
<feature type="chain" id="PRO_0000187954" description="ATP-dependent dethiobiotin synthetase BioD">
    <location>
        <begin position="1"/>
        <end position="201"/>
    </location>
</feature>
<feature type="active site" evidence="1">
    <location>
        <position position="31"/>
    </location>
</feature>
<feature type="binding site" evidence="1">
    <location>
        <begin position="11"/>
        <end position="16"/>
    </location>
    <ligand>
        <name>ATP</name>
        <dbReference type="ChEBI" id="CHEBI:30616"/>
    </ligand>
</feature>
<feature type="binding site" evidence="1">
    <location>
        <position position="15"/>
    </location>
    <ligand>
        <name>Mg(2+)</name>
        <dbReference type="ChEBI" id="CHEBI:18420"/>
    </ligand>
</feature>
<feature type="binding site" evidence="1">
    <location>
        <position position="40"/>
    </location>
    <ligand>
        <name>ATP</name>
        <dbReference type="ChEBI" id="CHEBI:30616"/>
    </ligand>
</feature>
<feature type="binding site" evidence="1">
    <location>
        <position position="40"/>
    </location>
    <ligand>
        <name>Mg(2+)</name>
        <dbReference type="ChEBI" id="CHEBI:18420"/>
    </ligand>
</feature>
<feature type="binding site" evidence="1">
    <location>
        <begin position="93"/>
        <end position="96"/>
    </location>
    <ligand>
        <name>ATP</name>
        <dbReference type="ChEBI" id="CHEBI:30616"/>
    </ligand>
</feature>
<feature type="binding site" evidence="1">
    <location>
        <position position="93"/>
    </location>
    <ligand>
        <name>Mg(2+)</name>
        <dbReference type="ChEBI" id="CHEBI:18420"/>
    </ligand>
</feature>
<protein>
    <recommendedName>
        <fullName evidence="1">ATP-dependent dethiobiotin synthetase BioD</fullName>
        <ecNumber evidence="1">6.3.3.3</ecNumber>
    </recommendedName>
    <alternativeName>
        <fullName evidence="1">DTB synthetase</fullName>
        <shortName evidence="1">DTBS</shortName>
    </alternativeName>
    <alternativeName>
        <fullName evidence="1">Dethiobiotin synthase</fullName>
    </alternativeName>
</protein>
<dbReference type="EC" id="6.3.3.3" evidence="1"/>
<dbReference type="EMBL" id="AL111168">
    <property type="protein sequence ID" value="CAL34459.1"/>
    <property type="molecule type" value="Genomic_DNA"/>
</dbReference>
<dbReference type="PIR" id="H81449">
    <property type="entry name" value="H81449"/>
</dbReference>
<dbReference type="RefSeq" id="WP_002816248.1">
    <property type="nucleotide sequence ID" value="NZ_SZUC01000004.1"/>
</dbReference>
<dbReference type="RefSeq" id="YP_002343746.1">
    <property type="nucleotide sequence ID" value="NC_002163.1"/>
</dbReference>
<dbReference type="SMR" id="Q9PIJ1"/>
<dbReference type="STRING" id="192222.Cj0308c"/>
<dbReference type="PaxDb" id="192222-Cj0308c"/>
<dbReference type="EnsemblBacteria" id="CAL34459">
    <property type="protein sequence ID" value="CAL34459"/>
    <property type="gene ID" value="Cj0308c"/>
</dbReference>
<dbReference type="GeneID" id="904632"/>
<dbReference type="KEGG" id="cje:Cj0308c"/>
<dbReference type="PATRIC" id="fig|192222.6.peg.300"/>
<dbReference type="eggNOG" id="COG0132">
    <property type="taxonomic scope" value="Bacteria"/>
</dbReference>
<dbReference type="HOGENOM" id="CLU_072551_2_0_7"/>
<dbReference type="OrthoDB" id="9802097at2"/>
<dbReference type="UniPathway" id="UPA00078">
    <property type="reaction ID" value="UER00161"/>
</dbReference>
<dbReference type="Proteomes" id="UP000000799">
    <property type="component" value="Chromosome"/>
</dbReference>
<dbReference type="GO" id="GO:0005829">
    <property type="term" value="C:cytosol"/>
    <property type="evidence" value="ECO:0007669"/>
    <property type="project" value="TreeGrafter"/>
</dbReference>
<dbReference type="GO" id="GO:0005524">
    <property type="term" value="F:ATP binding"/>
    <property type="evidence" value="ECO:0007669"/>
    <property type="project" value="UniProtKB-UniRule"/>
</dbReference>
<dbReference type="GO" id="GO:0004141">
    <property type="term" value="F:dethiobiotin synthase activity"/>
    <property type="evidence" value="ECO:0007669"/>
    <property type="project" value="UniProtKB-UniRule"/>
</dbReference>
<dbReference type="GO" id="GO:0000287">
    <property type="term" value="F:magnesium ion binding"/>
    <property type="evidence" value="ECO:0007669"/>
    <property type="project" value="UniProtKB-UniRule"/>
</dbReference>
<dbReference type="GO" id="GO:0009102">
    <property type="term" value="P:biotin biosynthetic process"/>
    <property type="evidence" value="ECO:0007669"/>
    <property type="project" value="UniProtKB-UniRule"/>
</dbReference>
<dbReference type="CDD" id="cd03109">
    <property type="entry name" value="DTBS"/>
    <property type="match status" value="1"/>
</dbReference>
<dbReference type="Gene3D" id="3.40.50.300">
    <property type="entry name" value="P-loop containing nucleotide triphosphate hydrolases"/>
    <property type="match status" value="1"/>
</dbReference>
<dbReference type="HAMAP" id="MF_00336">
    <property type="entry name" value="BioD"/>
    <property type="match status" value="1"/>
</dbReference>
<dbReference type="InterPro" id="IPR004472">
    <property type="entry name" value="DTB_synth_BioD"/>
</dbReference>
<dbReference type="InterPro" id="IPR027417">
    <property type="entry name" value="P-loop_NTPase"/>
</dbReference>
<dbReference type="PANTHER" id="PTHR43210">
    <property type="entry name" value="DETHIOBIOTIN SYNTHETASE"/>
    <property type="match status" value="1"/>
</dbReference>
<dbReference type="PANTHER" id="PTHR43210:SF5">
    <property type="entry name" value="DETHIOBIOTIN SYNTHETASE"/>
    <property type="match status" value="1"/>
</dbReference>
<dbReference type="Pfam" id="PF13500">
    <property type="entry name" value="AAA_26"/>
    <property type="match status" value="1"/>
</dbReference>
<dbReference type="PIRSF" id="PIRSF006755">
    <property type="entry name" value="DTB_synth"/>
    <property type="match status" value="1"/>
</dbReference>
<dbReference type="SUPFAM" id="SSF52540">
    <property type="entry name" value="P-loop containing nucleoside triphosphate hydrolases"/>
    <property type="match status" value="1"/>
</dbReference>
<gene>
    <name evidence="1" type="primary">bioD</name>
    <name type="ordered locus">Cj0308c</name>
</gene>
<proteinExistence type="inferred from homology"/>
<accession>Q9PIJ1</accession>
<accession>Q0PBK1</accession>
<reference key="1">
    <citation type="journal article" date="2000" name="Nature">
        <title>The genome sequence of the food-borne pathogen Campylobacter jejuni reveals hypervariable sequences.</title>
        <authorList>
            <person name="Parkhill J."/>
            <person name="Wren B.W."/>
            <person name="Mungall K.L."/>
            <person name="Ketley J.M."/>
            <person name="Churcher C.M."/>
            <person name="Basham D."/>
            <person name="Chillingworth T."/>
            <person name="Davies R.M."/>
            <person name="Feltwell T."/>
            <person name="Holroyd S."/>
            <person name="Jagels K."/>
            <person name="Karlyshev A.V."/>
            <person name="Moule S."/>
            <person name="Pallen M.J."/>
            <person name="Penn C.W."/>
            <person name="Quail M.A."/>
            <person name="Rajandream M.A."/>
            <person name="Rutherford K.M."/>
            <person name="van Vliet A.H.M."/>
            <person name="Whitehead S."/>
            <person name="Barrell B.G."/>
        </authorList>
    </citation>
    <scope>NUCLEOTIDE SEQUENCE [LARGE SCALE GENOMIC DNA]</scope>
    <source>
        <strain>ATCC 700819 / NCTC 11168</strain>
    </source>
</reference>
<evidence type="ECO:0000255" key="1">
    <source>
        <dbReference type="HAMAP-Rule" id="MF_00336"/>
    </source>
</evidence>
<comment type="function">
    <text evidence="1">Catalyzes a mechanistically unusual reaction, the ATP-dependent insertion of CO2 between the N7 and N8 nitrogen atoms of 7,8-diaminopelargonic acid (DAPA, also called 7,8-diammoniononanoate) to form a ureido ring.</text>
</comment>
<comment type="catalytic activity">
    <reaction evidence="1">
        <text>(7R,8S)-7,8-diammoniononanoate + CO2 + ATP = (4R,5S)-dethiobiotin + ADP + phosphate + 3 H(+)</text>
        <dbReference type="Rhea" id="RHEA:15805"/>
        <dbReference type="ChEBI" id="CHEBI:15378"/>
        <dbReference type="ChEBI" id="CHEBI:16526"/>
        <dbReference type="ChEBI" id="CHEBI:30616"/>
        <dbReference type="ChEBI" id="CHEBI:43474"/>
        <dbReference type="ChEBI" id="CHEBI:149469"/>
        <dbReference type="ChEBI" id="CHEBI:149473"/>
        <dbReference type="ChEBI" id="CHEBI:456216"/>
        <dbReference type="EC" id="6.3.3.3"/>
    </reaction>
</comment>
<comment type="cofactor">
    <cofactor evidence="1">
        <name>Mg(2+)</name>
        <dbReference type="ChEBI" id="CHEBI:18420"/>
    </cofactor>
</comment>
<comment type="pathway">
    <text evidence="1">Cofactor biosynthesis; biotin biosynthesis; biotin from 7,8-diaminononanoate: step 1/2.</text>
</comment>
<comment type="subunit">
    <text evidence="1">Homodimer.</text>
</comment>
<comment type="subcellular location">
    <subcellularLocation>
        <location evidence="1">Cytoplasm</location>
    </subcellularLocation>
</comment>
<comment type="similarity">
    <text evidence="1">Belongs to the dethiobiotin synthetase family.</text>
</comment>
<keyword id="KW-0067">ATP-binding</keyword>
<keyword id="KW-0093">Biotin biosynthesis</keyword>
<keyword id="KW-0963">Cytoplasm</keyword>
<keyword id="KW-0436">Ligase</keyword>
<keyword id="KW-0460">Magnesium</keyword>
<keyword id="KW-0479">Metal-binding</keyword>
<keyword id="KW-0547">Nucleotide-binding</keyword>
<keyword id="KW-1185">Reference proteome</keyword>
<organism>
    <name type="scientific">Campylobacter jejuni subsp. jejuni serotype O:2 (strain ATCC 700819 / NCTC 11168)</name>
    <dbReference type="NCBI Taxonomy" id="192222"/>
    <lineage>
        <taxon>Bacteria</taxon>
        <taxon>Pseudomonadati</taxon>
        <taxon>Campylobacterota</taxon>
        <taxon>Epsilonproteobacteria</taxon>
        <taxon>Campylobacterales</taxon>
        <taxon>Campylobacteraceae</taxon>
        <taxon>Campylobacter</taxon>
    </lineage>
</organism>